<gene>
    <name type="primary">dctA3</name>
    <name type="ordered locus">RSp0995</name>
    <name type="ORF">RS02327</name>
</gene>
<protein>
    <recommendedName>
        <fullName>C4-dicarboxylate transport protein 3</fullName>
    </recommendedName>
</protein>
<sequence>MIRKTLGKLYVQVLIGVAAGIVQGVAAPNLGSDLKPLGDVFIKLIKMVFAPIIFATVTLGIARMENMKELGRVGVRALVYFEVLSTFALALGLIVVNLVQPGQGMNVDAAHLDTKAIASYTHAAARPQTFVDFLLSLVPSSIIDALARNDILQILVFATLFGIALSRMGTRARPVVDFLDVFTQGVFSIVGMIMRLAPIAAFGAMAFTVGKYGLGSIAALGKLMATMYLTCVLFVAIVLGGVARLAGFSLWKFLRYIRDEIFTVLGTSSSESVVPQLMRKLESAGVSKPVVGLVVPSGLTFNPDGQCIYYTMAAIFVAQATNTPLTLTDQLVVLGVLLLTSKGSAGVTGSGFITLAATLASLGKIPVAGMVLLLGIDRFMSEARAITNTIGNAVGTLAIARWVGAVDRERLQAALDGVPEAAQTPPQAVHVHAPVAHVEAAHPPLAH</sequence>
<accession>Q8XR66</accession>
<reference key="1">
    <citation type="journal article" date="2002" name="Nature">
        <title>Genome sequence of the plant pathogen Ralstonia solanacearum.</title>
        <authorList>
            <person name="Salanoubat M."/>
            <person name="Genin S."/>
            <person name="Artiguenave F."/>
            <person name="Gouzy J."/>
            <person name="Mangenot S."/>
            <person name="Arlat M."/>
            <person name="Billault A."/>
            <person name="Brottier P."/>
            <person name="Camus J.-C."/>
            <person name="Cattolico L."/>
            <person name="Chandler M."/>
            <person name="Choisne N."/>
            <person name="Claudel-Renard C."/>
            <person name="Cunnac S."/>
            <person name="Demange N."/>
            <person name="Gaspin C."/>
            <person name="Lavie M."/>
            <person name="Moisan A."/>
            <person name="Robert C."/>
            <person name="Saurin W."/>
            <person name="Schiex T."/>
            <person name="Siguier P."/>
            <person name="Thebault P."/>
            <person name="Whalen M."/>
            <person name="Wincker P."/>
            <person name="Levy M."/>
            <person name="Weissenbach J."/>
            <person name="Boucher C.A."/>
        </authorList>
    </citation>
    <scope>NUCLEOTIDE SEQUENCE [LARGE SCALE GENOMIC DNA]</scope>
    <source>
        <strain>ATCC BAA-1114 / GMI1000</strain>
    </source>
</reference>
<geneLocation type="plasmid">
    <name>megaplasmid Rsp</name>
</geneLocation>
<organism>
    <name type="scientific">Ralstonia nicotianae (strain ATCC BAA-1114 / GMI1000)</name>
    <name type="common">Ralstonia solanacearum</name>
    <dbReference type="NCBI Taxonomy" id="267608"/>
    <lineage>
        <taxon>Bacteria</taxon>
        <taxon>Pseudomonadati</taxon>
        <taxon>Pseudomonadota</taxon>
        <taxon>Betaproteobacteria</taxon>
        <taxon>Burkholderiales</taxon>
        <taxon>Burkholderiaceae</taxon>
        <taxon>Ralstonia</taxon>
        <taxon>Ralstonia solanacearum species complex</taxon>
    </lineage>
</organism>
<proteinExistence type="inferred from homology"/>
<evidence type="ECO:0000250" key="1"/>
<evidence type="ECO:0000255" key="2"/>
<evidence type="ECO:0000305" key="3"/>
<dbReference type="EMBL" id="AL646053">
    <property type="protein sequence ID" value="CAD18146.1"/>
    <property type="molecule type" value="Genomic_DNA"/>
</dbReference>
<dbReference type="RefSeq" id="WP_011004285.1">
    <property type="nucleotide sequence ID" value="NC_003296.1"/>
</dbReference>
<dbReference type="SMR" id="Q8XR66"/>
<dbReference type="STRING" id="267608.RSp0995"/>
<dbReference type="EnsemblBacteria" id="CAD18146">
    <property type="protein sequence ID" value="CAD18146"/>
    <property type="gene ID" value="RSp0995"/>
</dbReference>
<dbReference type="KEGG" id="rso:RSp0995"/>
<dbReference type="PATRIC" id="fig|267608.8.peg.4476"/>
<dbReference type="eggNOG" id="COG1301">
    <property type="taxonomic scope" value="Bacteria"/>
</dbReference>
<dbReference type="HOGENOM" id="CLU_019375_7_0_4"/>
<dbReference type="Proteomes" id="UP000001436">
    <property type="component" value="Plasmid megaplasmid Rsp"/>
</dbReference>
<dbReference type="GO" id="GO:0005886">
    <property type="term" value="C:plasma membrane"/>
    <property type="evidence" value="ECO:0007669"/>
    <property type="project" value="UniProtKB-SubCell"/>
</dbReference>
<dbReference type="GO" id="GO:0015138">
    <property type="term" value="F:fumarate transmembrane transporter activity"/>
    <property type="evidence" value="ECO:0007669"/>
    <property type="project" value="TreeGrafter"/>
</dbReference>
<dbReference type="GO" id="GO:0015366">
    <property type="term" value="F:malate:proton symporter activity"/>
    <property type="evidence" value="ECO:0007669"/>
    <property type="project" value="TreeGrafter"/>
</dbReference>
<dbReference type="GO" id="GO:0015141">
    <property type="term" value="F:succinate transmembrane transporter activity"/>
    <property type="evidence" value="ECO:0007669"/>
    <property type="project" value="TreeGrafter"/>
</dbReference>
<dbReference type="GO" id="GO:0070778">
    <property type="term" value="P:L-aspartate transmembrane transport"/>
    <property type="evidence" value="ECO:0007669"/>
    <property type="project" value="TreeGrafter"/>
</dbReference>
<dbReference type="FunFam" id="1.10.3860.10:FF:000001">
    <property type="entry name" value="C4-dicarboxylate transport protein"/>
    <property type="match status" value="1"/>
</dbReference>
<dbReference type="Gene3D" id="1.10.3860.10">
    <property type="entry name" value="Sodium:dicarboxylate symporter"/>
    <property type="match status" value="1"/>
</dbReference>
<dbReference type="HAMAP" id="MF_01300">
    <property type="entry name" value="C4_dicarb_transport"/>
    <property type="match status" value="1"/>
</dbReference>
<dbReference type="InterPro" id="IPR023954">
    <property type="entry name" value="C4_dicarb_transport"/>
</dbReference>
<dbReference type="InterPro" id="IPR001991">
    <property type="entry name" value="Na-dicarboxylate_symporter"/>
</dbReference>
<dbReference type="InterPro" id="IPR018107">
    <property type="entry name" value="Na-dicarboxylate_symporter_CS"/>
</dbReference>
<dbReference type="InterPro" id="IPR036458">
    <property type="entry name" value="Na:dicarbo_symporter_sf"/>
</dbReference>
<dbReference type="NCBIfam" id="NF002461">
    <property type="entry name" value="PRK01663.1"/>
    <property type="match status" value="1"/>
</dbReference>
<dbReference type="PANTHER" id="PTHR42865:SF1">
    <property type="entry name" value="AEROBIC C4-DICARBOXYLATE TRANSPORT PROTEIN"/>
    <property type="match status" value="1"/>
</dbReference>
<dbReference type="PANTHER" id="PTHR42865">
    <property type="entry name" value="PROTON/GLUTAMATE-ASPARTATE SYMPORTER"/>
    <property type="match status" value="1"/>
</dbReference>
<dbReference type="Pfam" id="PF00375">
    <property type="entry name" value="SDF"/>
    <property type="match status" value="1"/>
</dbReference>
<dbReference type="PRINTS" id="PR00173">
    <property type="entry name" value="EDTRNSPORT"/>
</dbReference>
<dbReference type="SUPFAM" id="SSF118215">
    <property type="entry name" value="Proton glutamate symport protein"/>
    <property type="match status" value="1"/>
</dbReference>
<dbReference type="PROSITE" id="PS00713">
    <property type="entry name" value="NA_DICARBOXYL_SYMP_1"/>
    <property type="match status" value="1"/>
</dbReference>
<dbReference type="PROSITE" id="PS00714">
    <property type="entry name" value="NA_DICARBOXYL_SYMP_2"/>
    <property type="match status" value="1"/>
</dbReference>
<name>DCTA3_RALN1</name>
<keyword id="KW-0997">Cell inner membrane</keyword>
<keyword id="KW-1003">Cell membrane</keyword>
<keyword id="KW-0472">Membrane</keyword>
<keyword id="KW-0614">Plasmid</keyword>
<keyword id="KW-1185">Reference proteome</keyword>
<keyword id="KW-0769">Symport</keyword>
<keyword id="KW-0812">Transmembrane</keyword>
<keyword id="KW-1133">Transmembrane helix</keyword>
<keyword id="KW-0813">Transport</keyword>
<comment type="function">
    <text evidence="1">Responsible for the transport of dicarboxylates such as succinate, fumarate, and malate from the periplasm across the membrane.</text>
</comment>
<comment type="subcellular location">
    <subcellularLocation>
        <location evidence="1">Cell inner membrane</location>
        <topology evidence="1">Multi-pass membrane protein</topology>
    </subcellularLocation>
</comment>
<comment type="similarity">
    <text evidence="3">Belongs to the dicarboxylate/amino acid:cation symporter (DAACS) (TC 2.A.23) family.</text>
</comment>
<feature type="chain" id="PRO_0000202104" description="C4-dicarboxylate transport protein 3">
    <location>
        <begin position="1"/>
        <end position="447"/>
    </location>
</feature>
<feature type="transmembrane region" description="Helical" evidence="2">
    <location>
        <begin position="5"/>
        <end position="27"/>
    </location>
</feature>
<feature type="transmembrane region" description="Helical" evidence="2">
    <location>
        <begin position="42"/>
        <end position="64"/>
    </location>
</feature>
<feature type="transmembrane region" description="Helical" evidence="2">
    <location>
        <begin position="77"/>
        <end position="99"/>
    </location>
</feature>
<feature type="transmembrane region" description="Helical" evidence="2">
    <location>
        <begin position="146"/>
        <end position="165"/>
    </location>
</feature>
<feature type="transmembrane region" description="Helical" evidence="2">
    <location>
        <begin position="186"/>
        <end position="208"/>
    </location>
</feature>
<feature type="transmembrane region" description="Helical" evidence="2">
    <location>
        <begin position="223"/>
        <end position="245"/>
    </location>
</feature>
<feature type="transmembrane region" description="Helical" evidence="2">
    <location>
        <begin position="315"/>
        <end position="337"/>
    </location>
</feature>
<feature type="transmembrane region" description="Helical" evidence="2">
    <location>
        <begin position="352"/>
        <end position="374"/>
    </location>
</feature>